<name>Y5312_DICDI</name>
<dbReference type="EMBL" id="AAFI02000046">
    <property type="protein sequence ID" value="EAL66346.1"/>
    <property type="molecule type" value="Genomic_DNA"/>
</dbReference>
<dbReference type="RefSeq" id="XP_640325.1">
    <property type="nucleotide sequence ID" value="XM_635233.1"/>
</dbReference>
<dbReference type="PaxDb" id="44689-DDB0205312"/>
<dbReference type="EnsemblProtists" id="EAL66346">
    <property type="protein sequence ID" value="EAL66346"/>
    <property type="gene ID" value="DDB_G0282281"/>
</dbReference>
<dbReference type="GeneID" id="8623501"/>
<dbReference type="KEGG" id="ddi:DDB_G0282281"/>
<dbReference type="dictyBase" id="DDB_G0282281"/>
<dbReference type="HOGENOM" id="CLU_1646850_0_0_1"/>
<dbReference type="InParanoid" id="Q54SR0"/>
<dbReference type="PRO" id="PR:Q54SR0"/>
<dbReference type="Proteomes" id="UP000002195">
    <property type="component" value="Chromosome 3"/>
</dbReference>
<evidence type="ECO:0000256" key="1">
    <source>
        <dbReference type="SAM" id="MobiDB-lite"/>
    </source>
</evidence>
<organism>
    <name type="scientific">Dictyostelium discoideum</name>
    <name type="common">Social amoeba</name>
    <dbReference type="NCBI Taxonomy" id="44689"/>
    <lineage>
        <taxon>Eukaryota</taxon>
        <taxon>Amoebozoa</taxon>
        <taxon>Evosea</taxon>
        <taxon>Eumycetozoa</taxon>
        <taxon>Dictyostelia</taxon>
        <taxon>Dictyosteliales</taxon>
        <taxon>Dictyosteliaceae</taxon>
        <taxon>Dictyostelium</taxon>
    </lineage>
</organism>
<sequence>MNSNNCNTNMNMNNNNNMNNNNNPNMNNNICQSNNMNNQYRNNNMNNFSNTHNNNNNNNNNNTIQNFNDNSLKKRRFEDDSHQNFNDNGFNNNNNNNNSNMNHNFSNQNNYNNNNNNNNNNNSNFNGIVFKSKKGTSSQVGNNKKKQFNNNLEISDWNKLS</sequence>
<protein>
    <recommendedName>
        <fullName>Putative uncharacterized protein DDB_G0282281</fullName>
    </recommendedName>
</protein>
<accession>Q54SR0</accession>
<reference key="1">
    <citation type="journal article" date="2005" name="Nature">
        <title>The genome of the social amoeba Dictyostelium discoideum.</title>
        <authorList>
            <person name="Eichinger L."/>
            <person name="Pachebat J.A."/>
            <person name="Gloeckner G."/>
            <person name="Rajandream M.A."/>
            <person name="Sucgang R."/>
            <person name="Berriman M."/>
            <person name="Song J."/>
            <person name="Olsen R."/>
            <person name="Szafranski K."/>
            <person name="Xu Q."/>
            <person name="Tunggal B."/>
            <person name="Kummerfeld S."/>
            <person name="Madera M."/>
            <person name="Konfortov B.A."/>
            <person name="Rivero F."/>
            <person name="Bankier A.T."/>
            <person name="Lehmann R."/>
            <person name="Hamlin N."/>
            <person name="Davies R."/>
            <person name="Gaudet P."/>
            <person name="Fey P."/>
            <person name="Pilcher K."/>
            <person name="Chen G."/>
            <person name="Saunders D."/>
            <person name="Sodergren E.J."/>
            <person name="Davis P."/>
            <person name="Kerhornou A."/>
            <person name="Nie X."/>
            <person name="Hall N."/>
            <person name="Anjard C."/>
            <person name="Hemphill L."/>
            <person name="Bason N."/>
            <person name="Farbrother P."/>
            <person name="Desany B."/>
            <person name="Just E."/>
            <person name="Morio T."/>
            <person name="Rost R."/>
            <person name="Churcher C.M."/>
            <person name="Cooper J."/>
            <person name="Haydock S."/>
            <person name="van Driessche N."/>
            <person name="Cronin A."/>
            <person name="Goodhead I."/>
            <person name="Muzny D.M."/>
            <person name="Mourier T."/>
            <person name="Pain A."/>
            <person name="Lu M."/>
            <person name="Harper D."/>
            <person name="Lindsay R."/>
            <person name="Hauser H."/>
            <person name="James K.D."/>
            <person name="Quiles M."/>
            <person name="Madan Babu M."/>
            <person name="Saito T."/>
            <person name="Buchrieser C."/>
            <person name="Wardroper A."/>
            <person name="Felder M."/>
            <person name="Thangavelu M."/>
            <person name="Johnson D."/>
            <person name="Knights A."/>
            <person name="Loulseged H."/>
            <person name="Mungall K.L."/>
            <person name="Oliver K."/>
            <person name="Price C."/>
            <person name="Quail M.A."/>
            <person name="Urushihara H."/>
            <person name="Hernandez J."/>
            <person name="Rabbinowitsch E."/>
            <person name="Steffen D."/>
            <person name="Sanders M."/>
            <person name="Ma J."/>
            <person name="Kohara Y."/>
            <person name="Sharp S."/>
            <person name="Simmonds M.N."/>
            <person name="Spiegler S."/>
            <person name="Tivey A."/>
            <person name="Sugano S."/>
            <person name="White B."/>
            <person name="Walker D."/>
            <person name="Woodward J.R."/>
            <person name="Winckler T."/>
            <person name="Tanaka Y."/>
            <person name="Shaulsky G."/>
            <person name="Schleicher M."/>
            <person name="Weinstock G.M."/>
            <person name="Rosenthal A."/>
            <person name="Cox E.C."/>
            <person name="Chisholm R.L."/>
            <person name="Gibbs R.A."/>
            <person name="Loomis W.F."/>
            <person name="Platzer M."/>
            <person name="Kay R.R."/>
            <person name="Williams J.G."/>
            <person name="Dear P.H."/>
            <person name="Noegel A.A."/>
            <person name="Barrell B.G."/>
            <person name="Kuspa A."/>
        </authorList>
    </citation>
    <scope>NUCLEOTIDE SEQUENCE [LARGE SCALE GENOMIC DNA]</scope>
    <source>
        <strain>AX4</strain>
    </source>
</reference>
<gene>
    <name type="ORF">DDB_G0282281</name>
</gene>
<keyword id="KW-1185">Reference proteome</keyword>
<proteinExistence type="predicted"/>
<feature type="chain" id="PRO_0000351252" description="Putative uncharacterized protein DDB_G0282281">
    <location>
        <begin position="1"/>
        <end position="161"/>
    </location>
</feature>
<feature type="region of interest" description="Disordered" evidence="1">
    <location>
        <begin position="1"/>
        <end position="67"/>
    </location>
</feature>
<feature type="region of interest" description="Disordered" evidence="1">
    <location>
        <begin position="80"/>
        <end position="147"/>
    </location>
</feature>
<feature type="compositionally biased region" description="Low complexity" evidence="1">
    <location>
        <begin position="84"/>
        <end position="126"/>
    </location>
</feature>
<feature type="compositionally biased region" description="Polar residues" evidence="1">
    <location>
        <begin position="135"/>
        <end position="147"/>
    </location>
</feature>